<proteinExistence type="inferred from homology"/>
<comment type="function">
    <text evidence="1">The glycine cleavage system catalyzes the degradation of glycine. The H protein shuttles the methylamine group of glycine from the P protein to the T protein.</text>
</comment>
<comment type="cofactor">
    <cofactor evidence="1">
        <name>(R)-lipoate</name>
        <dbReference type="ChEBI" id="CHEBI:83088"/>
    </cofactor>
    <text evidence="1">Binds 1 lipoyl cofactor covalently.</text>
</comment>
<comment type="subunit">
    <text evidence="1">The glycine cleavage system is composed of four proteins: P, T, L and H.</text>
</comment>
<comment type="similarity">
    <text evidence="1">Belongs to the GcvH family.</text>
</comment>
<reference key="1">
    <citation type="journal article" date="2000" name="Proc. Natl. Acad. Sci. U.S.A.">
        <title>Genome sequence of Halobacterium species NRC-1.</title>
        <authorList>
            <person name="Ng W.V."/>
            <person name="Kennedy S.P."/>
            <person name="Mahairas G.G."/>
            <person name="Berquist B."/>
            <person name="Pan M."/>
            <person name="Shukla H.D."/>
            <person name="Lasky S.R."/>
            <person name="Baliga N.S."/>
            <person name="Thorsson V."/>
            <person name="Sbrogna J."/>
            <person name="Swartzell S."/>
            <person name="Weir D."/>
            <person name="Hall J."/>
            <person name="Dahl T.A."/>
            <person name="Welti R."/>
            <person name="Goo Y.A."/>
            <person name="Leithauser B."/>
            <person name="Keller K."/>
            <person name="Cruz R."/>
            <person name="Danson M.J."/>
            <person name="Hough D.W."/>
            <person name="Maddocks D.G."/>
            <person name="Jablonski P.E."/>
            <person name="Krebs M.P."/>
            <person name="Angevine C.M."/>
            <person name="Dale H."/>
            <person name="Isenbarger T.A."/>
            <person name="Peck R.F."/>
            <person name="Pohlschroder M."/>
            <person name="Spudich J.L."/>
            <person name="Jung K.-H."/>
            <person name="Alam M."/>
            <person name="Freitas T."/>
            <person name="Hou S."/>
            <person name="Daniels C.J."/>
            <person name="Dennis P.P."/>
            <person name="Omer A.D."/>
            <person name="Ebhardt H."/>
            <person name="Lowe T.M."/>
            <person name="Liang P."/>
            <person name="Riley M."/>
            <person name="Hood L."/>
            <person name="DasSarma S."/>
        </authorList>
    </citation>
    <scope>NUCLEOTIDE SEQUENCE [LARGE SCALE GENOMIC DNA]</scope>
    <source>
        <strain>ATCC 700922 / JCM 11081 / NRC-1</strain>
    </source>
</reference>
<dbReference type="EMBL" id="AE004437">
    <property type="protein sequence ID" value="AAG19869.1"/>
    <property type="molecule type" value="Genomic_DNA"/>
</dbReference>
<dbReference type="PIR" id="A84313">
    <property type="entry name" value="A84313"/>
</dbReference>
<dbReference type="RefSeq" id="WP_010903167.1">
    <property type="nucleotide sequence ID" value="NC_002607.1"/>
</dbReference>
<dbReference type="SMR" id="Q9HPJ8"/>
<dbReference type="STRING" id="64091.VNG_1605G"/>
<dbReference type="PaxDb" id="64091-VNG_1605G"/>
<dbReference type="GeneID" id="89349867"/>
<dbReference type="KEGG" id="hal:VNG_1605G"/>
<dbReference type="PATRIC" id="fig|64091.14.peg.1222"/>
<dbReference type="HOGENOM" id="CLU_097408_2_0_2"/>
<dbReference type="InParanoid" id="Q9HPJ8"/>
<dbReference type="OrthoDB" id="9810at2157"/>
<dbReference type="PhylomeDB" id="Q9HPJ8"/>
<dbReference type="Proteomes" id="UP000000554">
    <property type="component" value="Chromosome"/>
</dbReference>
<dbReference type="GO" id="GO:0005960">
    <property type="term" value="C:glycine cleavage complex"/>
    <property type="evidence" value="ECO:0007669"/>
    <property type="project" value="InterPro"/>
</dbReference>
<dbReference type="GO" id="GO:0019464">
    <property type="term" value="P:glycine decarboxylation via glycine cleavage system"/>
    <property type="evidence" value="ECO:0007669"/>
    <property type="project" value="UniProtKB-UniRule"/>
</dbReference>
<dbReference type="CDD" id="cd06848">
    <property type="entry name" value="GCS_H"/>
    <property type="match status" value="1"/>
</dbReference>
<dbReference type="Gene3D" id="2.40.50.100">
    <property type="match status" value="1"/>
</dbReference>
<dbReference type="HAMAP" id="MF_00272">
    <property type="entry name" value="GcvH"/>
    <property type="match status" value="1"/>
</dbReference>
<dbReference type="InterPro" id="IPR003016">
    <property type="entry name" value="2-oxoA_DH_lipoyl-BS"/>
</dbReference>
<dbReference type="InterPro" id="IPR000089">
    <property type="entry name" value="Biotin_lipoyl"/>
</dbReference>
<dbReference type="InterPro" id="IPR002930">
    <property type="entry name" value="GCV_H"/>
</dbReference>
<dbReference type="InterPro" id="IPR033753">
    <property type="entry name" value="GCV_H/Fam206"/>
</dbReference>
<dbReference type="InterPro" id="IPR017453">
    <property type="entry name" value="GCV_H_sub"/>
</dbReference>
<dbReference type="InterPro" id="IPR011053">
    <property type="entry name" value="Single_hybrid_motif"/>
</dbReference>
<dbReference type="NCBIfam" id="TIGR00527">
    <property type="entry name" value="gcvH"/>
    <property type="match status" value="1"/>
</dbReference>
<dbReference type="NCBIfam" id="NF002270">
    <property type="entry name" value="PRK01202.1"/>
    <property type="match status" value="1"/>
</dbReference>
<dbReference type="PANTHER" id="PTHR11715">
    <property type="entry name" value="GLYCINE CLEAVAGE SYSTEM H PROTEIN"/>
    <property type="match status" value="1"/>
</dbReference>
<dbReference type="PANTHER" id="PTHR11715:SF3">
    <property type="entry name" value="GLYCINE CLEAVAGE SYSTEM H PROTEIN-RELATED"/>
    <property type="match status" value="1"/>
</dbReference>
<dbReference type="Pfam" id="PF01597">
    <property type="entry name" value="GCV_H"/>
    <property type="match status" value="1"/>
</dbReference>
<dbReference type="SUPFAM" id="SSF51230">
    <property type="entry name" value="Single hybrid motif"/>
    <property type="match status" value="1"/>
</dbReference>
<dbReference type="PROSITE" id="PS50968">
    <property type="entry name" value="BIOTINYL_LIPOYL"/>
    <property type="match status" value="1"/>
</dbReference>
<dbReference type="PROSITE" id="PS00189">
    <property type="entry name" value="LIPOYL"/>
    <property type="match status" value="1"/>
</dbReference>
<evidence type="ECO:0000255" key="1">
    <source>
        <dbReference type="HAMAP-Rule" id="MF_00272"/>
    </source>
</evidence>
<evidence type="ECO:0000255" key="2">
    <source>
        <dbReference type="PROSITE-ProRule" id="PRU01066"/>
    </source>
</evidence>
<accession>Q9HPJ8</accession>
<name>GCSH_HALSA</name>
<keyword id="KW-0450">Lipoyl</keyword>
<keyword id="KW-1185">Reference proteome</keyword>
<gene>
    <name evidence="1" type="primary">gcvH</name>
    <name type="ordered locus">VNG_1605G</name>
</gene>
<organism>
    <name type="scientific">Halobacterium salinarum (strain ATCC 700922 / JCM 11081 / NRC-1)</name>
    <name type="common">Halobacterium halobium</name>
    <dbReference type="NCBI Taxonomy" id="64091"/>
    <lineage>
        <taxon>Archaea</taxon>
        <taxon>Methanobacteriati</taxon>
        <taxon>Methanobacteriota</taxon>
        <taxon>Stenosarchaea group</taxon>
        <taxon>Halobacteria</taxon>
        <taxon>Halobacteriales</taxon>
        <taxon>Halobacteriaceae</taxon>
        <taxon>Halobacterium</taxon>
        <taxon>Halobacterium salinarum NRC-34001</taxon>
    </lineage>
</organism>
<protein>
    <recommendedName>
        <fullName evidence="1">Probable glycine cleavage system H protein</fullName>
    </recommendedName>
</protein>
<feature type="chain" id="PRO_0000166273" description="Probable glycine cleavage system H protein">
    <location>
        <begin position="1"/>
        <end position="124"/>
    </location>
</feature>
<feature type="domain" description="Lipoyl-binding" evidence="2">
    <location>
        <begin position="22"/>
        <end position="104"/>
    </location>
</feature>
<feature type="modified residue" description="N6-lipoyllysine" evidence="1">
    <location>
        <position position="63"/>
    </location>
</feature>
<sequence>MSFDVPDDLQYLESHEWIDPATGRVGISEFAQDELGDVVFVELPSVGDALDQHDELGVVESIKAVSDLYAPVSGEVTAVNDALTNEPELVNEAPFGDGWLVEIDFDSDDLEATLDSDDYRAQIA</sequence>